<organism>
    <name type="scientific">Staphylococcus aureus (strain JH9)</name>
    <dbReference type="NCBI Taxonomy" id="359786"/>
    <lineage>
        <taxon>Bacteria</taxon>
        <taxon>Bacillati</taxon>
        <taxon>Bacillota</taxon>
        <taxon>Bacilli</taxon>
        <taxon>Bacillales</taxon>
        <taxon>Staphylococcaceae</taxon>
        <taxon>Staphylococcus</taxon>
    </lineage>
</organism>
<name>YIDC_STAA9</name>
<comment type="function">
    <text evidence="1">Required for the insertion and/or proper folding and/or complex formation of integral membrane proteins into the membrane. Involved in integration of membrane proteins that insert both dependently and independently of the Sec translocase complex, as well as at least some lipoproteins.</text>
</comment>
<comment type="subcellular location">
    <subcellularLocation>
        <location evidence="1">Cell membrane</location>
        <topology evidence="1">Multi-pass membrane protein</topology>
    </subcellularLocation>
</comment>
<comment type="similarity">
    <text evidence="1">Belongs to the OXA1/ALB3/YidC family. Type 2 subfamily.</text>
</comment>
<reference key="1">
    <citation type="submission" date="2007-05" db="EMBL/GenBank/DDBJ databases">
        <title>Complete sequence of chromosome of Staphylococcus aureus subsp. aureus JH9.</title>
        <authorList>
            <consortium name="US DOE Joint Genome Institute"/>
            <person name="Copeland A."/>
            <person name="Lucas S."/>
            <person name="Lapidus A."/>
            <person name="Barry K."/>
            <person name="Detter J.C."/>
            <person name="Glavina del Rio T."/>
            <person name="Hammon N."/>
            <person name="Israni S."/>
            <person name="Pitluck S."/>
            <person name="Chain P."/>
            <person name="Malfatti S."/>
            <person name="Shin M."/>
            <person name="Vergez L."/>
            <person name="Schmutz J."/>
            <person name="Larimer F."/>
            <person name="Land M."/>
            <person name="Hauser L."/>
            <person name="Kyrpides N."/>
            <person name="Kim E."/>
            <person name="Tomasz A."/>
            <person name="Richardson P."/>
        </authorList>
    </citation>
    <scope>NUCLEOTIDE SEQUENCE [LARGE SCALE GENOMIC DNA]</scope>
    <source>
        <strain>JH9</strain>
    </source>
</reference>
<dbReference type="EMBL" id="CP000703">
    <property type="protein sequence ID" value="ABQ49909.1"/>
    <property type="molecule type" value="Genomic_DNA"/>
</dbReference>
<dbReference type="RefSeq" id="WP_000725802.1">
    <property type="nucleotide sequence ID" value="NC_009487.1"/>
</dbReference>
<dbReference type="SMR" id="A5IUN6"/>
<dbReference type="KEGG" id="saj:SaurJH9_2127"/>
<dbReference type="HOGENOM" id="CLU_036138_5_2_9"/>
<dbReference type="GO" id="GO:0005886">
    <property type="term" value="C:plasma membrane"/>
    <property type="evidence" value="ECO:0007669"/>
    <property type="project" value="UniProtKB-SubCell"/>
</dbReference>
<dbReference type="GO" id="GO:0032977">
    <property type="term" value="F:membrane insertase activity"/>
    <property type="evidence" value="ECO:0007669"/>
    <property type="project" value="InterPro"/>
</dbReference>
<dbReference type="GO" id="GO:0051205">
    <property type="term" value="P:protein insertion into membrane"/>
    <property type="evidence" value="ECO:0007669"/>
    <property type="project" value="TreeGrafter"/>
</dbReference>
<dbReference type="GO" id="GO:0015031">
    <property type="term" value="P:protein transport"/>
    <property type="evidence" value="ECO:0007669"/>
    <property type="project" value="UniProtKB-KW"/>
</dbReference>
<dbReference type="CDD" id="cd20070">
    <property type="entry name" value="5TM_YidC_Alb3"/>
    <property type="match status" value="1"/>
</dbReference>
<dbReference type="HAMAP" id="MF_01811">
    <property type="entry name" value="YidC_type2"/>
    <property type="match status" value="1"/>
</dbReference>
<dbReference type="InterPro" id="IPR001708">
    <property type="entry name" value="YidC/ALB3/OXA1/COX18"/>
</dbReference>
<dbReference type="InterPro" id="IPR028055">
    <property type="entry name" value="YidC/Oxa/ALB_C"/>
</dbReference>
<dbReference type="InterPro" id="IPR023060">
    <property type="entry name" value="YidC/YidC1/YidC2_Firmicutes"/>
</dbReference>
<dbReference type="InterPro" id="IPR047196">
    <property type="entry name" value="YidC_ALB_C"/>
</dbReference>
<dbReference type="NCBIfam" id="TIGR03592">
    <property type="entry name" value="yidC_oxa1_cterm"/>
    <property type="match status" value="1"/>
</dbReference>
<dbReference type="PANTHER" id="PTHR12428:SF65">
    <property type="entry name" value="CYTOCHROME C OXIDASE ASSEMBLY PROTEIN COX18, MITOCHONDRIAL"/>
    <property type="match status" value="1"/>
</dbReference>
<dbReference type="PANTHER" id="PTHR12428">
    <property type="entry name" value="OXA1"/>
    <property type="match status" value="1"/>
</dbReference>
<dbReference type="Pfam" id="PF02096">
    <property type="entry name" value="60KD_IMP"/>
    <property type="match status" value="1"/>
</dbReference>
<dbReference type="PRINTS" id="PR00701">
    <property type="entry name" value="60KDINNERMP"/>
</dbReference>
<dbReference type="PROSITE" id="PS51257">
    <property type="entry name" value="PROKAR_LIPOPROTEIN"/>
    <property type="match status" value="1"/>
</dbReference>
<protein>
    <recommendedName>
        <fullName evidence="1">Membrane protein insertase YidC</fullName>
    </recommendedName>
    <alternativeName>
        <fullName evidence="1">Foldase YidC</fullName>
    </alternativeName>
    <alternativeName>
        <fullName evidence="1">Membrane integrase YidC</fullName>
    </alternativeName>
    <alternativeName>
        <fullName evidence="1">Membrane protein YidC</fullName>
    </alternativeName>
</protein>
<evidence type="ECO:0000255" key="1">
    <source>
        <dbReference type="HAMAP-Rule" id="MF_01811"/>
    </source>
</evidence>
<evidence type="ECO:0000256" key="2">
    <source>
        <dbReference type="SAM" id="MobiDB-lite"/>
    </source>
</evidence>
<sequence length="290" mass="33581">MKKKALLPLFLGIMVFLAGCDYSKPEKRSGFFYNTFVDPMKNVLDWLGNNLLNDNYGLAIIILVLVIRIILLPFMLSNYKNSHMMRQKMKVAKPEVEKIQEKVKRARTQEEKMAANQELMQVYKKYDMNPIKSMLGCLPMLIQLPIIMGLYFVLKDQLVDGLFKYPHFLWFDLGRPDIWITIIAGVLYFIQAYVSSKTMPDEQRQMGYMMMVISPIMIIWISLSSASALGLYWSVSAAFLVVQTHFANIYYEKVAKKEVQPFIEAYEREHNGGSNKKGKNTQVVSKKKKK</sequence>
<feature type="signal peptide" evidence="1">
    <location>
        <begin position="1"/>
        <end position="19"/>
    </location>
</feature>
<feature type="chain" id="PRO_5000247352" description="Membrane protein insertase YidC">
    <location>
        <begin position="20"/>
        <end position="290"/>
    </location>
</feature>
<feature type="transmembrane region" description="Helical" evidence="1">
    <location>
        <begin position="56"/>
        <end position="76"/>
    </location>
</feature>
<feature type="transmembrane region" description="Helical" evidence="1">
    <location>
        <begin position="134"/>
        <end position="154"/>
    </location>
</feature>
<feature type="transmembrane region" description="Helical" evidence="1">
    <location>
        <begin position="176"/>
        <end position="196"/>
    </location>
</feature>
<feature type="transmembrane region" description="Helical" evidence="1">
    <location>
        <begin position="207"/>
        <end position="224"/>
    </location>
</feature>
<feature type="transmembrane region" description="Helical" evidence="1">
    <location>
        <begin position="229"/>
        <end position="251"/>
    </location>
</feature>
<feature type="region of interest" description="Disordered" evidence="2">
    <location>
        <begin position="270"/>
        <end position="290"/>
    </location>
</feature>
<feature type="lipid moiety-binding region" description="N-palmitoyl cysteine" evidence="1">
    <location>
        <position position="20"/>
    </location>
</feature>
<feature type="lipid moiety-binding region" description="S-diacylglycerol cysteine" evidence="1">
    <location>
        <position position="20"/>
    </location>
</feature>
<proteinExistence type="inferred from homology"/>
<gene>
    <name evidence="1" type="primary">yidC</name>
    <name type="ordered locus">SaurJH9_2127</name>
</gene>
<keyword id="KW-1003">Cell membrane</keyword>
<keyword id="KW-0143">Chaperone</keyword>
<keyword id="KW-0449">Lipoprotein</keyword>
<keyword id="KW-0472">Membrane</keyword>
<keyword id="KW-0564">Palmitate</keyword>
<keyword id="KW-0653">Protein transport</keyword>
<keyword id="KW-0732">Signal</keyword>
<keyword id="KW-0812">Transmembrane</keyword>
<keyword id="KW-1133">Transmembrane helix</keyword>
<keyword id="KW-0813">Transport</keyword>
<accession>A5IUN6</accession>